<reference key="1">
    <citation type="journal article" date="2005" name="Science">
        <title>The transcriptional landscape of the mammalian genome.</title>
        <authorList>
            <person name="Carninci P."/>
            <person name="Kasukawa T."/>
            <person name="Katayama S."/>
            <person name="Gough J."/>
            <person name="Frith M.C."/>
            <person name="Maeda N."/>
            <person name="Oyama R."/>
            <person name="Ravasi T."/>
            <person name="Lenhard B."/>
            <person name="Wells C."/>
            <person name="Kodzius R."/>
            <person name="Shimokawa K."/>
            <person name="Bajic V.B."/>
            <person name="Brenner S.E."/>
            <person name="Batalov S."/>
            <person name="Forrest A.R."/>
            <person name="Zavolan M."/>
            <person name="Davis M.J."/>
            <person name="Wilming L.G."/>
            <person name="Aidinis V."/>
            <person name="Allen J.E."/>
            <person name="Ambesi-Impiombato A."/>
            <person name="Apweiler R."/>
            <person name="Aturaliya R.N."/>
            <person name="Bailey T.L."/>
            <person name="Bansal M."/>
            <person name="Baxter L."/>
            <person name="Beisel K.W."/>
            <person name="Bersano T."/>
            <person name="Bono H."/>
            <person name="Chalk A.M."/>
            <person name="Chiu K.P."/>
            <person name="Choudhary V."/>
            <person name="Christoffels A."/>
            <person name="Clutterbuck D.R."/>
            <person name="Crowe M.L."/>
            <person name="Dalla E."/>
            <person name="Dalrymple B.P."/>
            <person name="de Bono B."/>
            <person name="Della Gatta G."/>
            <person name="di Bernardo D."/>
            <person name="Down T."/>
            <person name="Engstrom P."/>
            <person name="Fagiolini M."/>
            <person name="Faulkner G."/>
            <person name="Fletcher C.F."/>
            <person name="Fukushima T."/>
            <person name="Furuno M."/>
            <person name="Futaki S."/>
            <person name="Gariboldi M."/>
            <person name="Georgii-Hemming P."/>
            <person name="Gingeras T.R."/>
            <person name="Gojobori T."/>
            <person name="Green R.E."/>
            <person name="Gustincich S."/>
            <person name="Harbers M."/>
            <person name="Hayashi Y."/>
            <person name="Hensch T.K."/>
            <person name="Hirokawa N."/>
            <person name="Hill D."/>
            <person name="Huminiecki L."/>
            <person name="Iacono M."/>
            <person name="Ikeo K."/>
            <person name="Iwama A."/>
            <person name="Ishikawa T."/>
            <person name="Jakt M."/>
            <person name="Kanapin A."/>
            <person name="Katoh M."/>
            <person name="Kawasawa Y."/>
            <person name="Kelso J."/>
            <person name="Kitamura H."/>
            <person name="Kitano H."/>
            <person name="Kollias G."/>
            <person name="Krishnan S.P."/>
            <person name="Kruger A."/>
            <person name="Kummerfeld S.K."/>
            <person name="Kurochkin I.V."/>
            <person name="Lareau L.F."/>
            <person name="Lazarevic D."/>
            <person name="Lipovich L."/>
            <person name="Liu J."/>
            <person name="Liuni S."/>
            <person name="McWilliam S."/>
            <person name="Madan Babu M."/>
            <person name="Madera M."/>
            <person name="Marchionni L."/>
            <person name="Matsuda H."/>
            <person name="Matsuzawa S."/>
            <person name="Miki H."/>
            <person name="Mignone F."/>
            <person name="Miyake S."/>
            <person name="Morris K."/>
            <person name="Mottagui-Tabar S."/>
            <person name="Mulder N."/>
            <person name="Nakano N."/>
            <person name="Nakauchi H."/>
            <person name="Ng P."/>
            <person name="Nilsson R."/>
            <person name="Nishiguchi S."/>
            <person name="Nishikawa S."/>
            <person name="Nori F."/>
            <person name="Ohara O."/>
            <person name="Okazaki Y."/>
            <person name="Orlando V."/>
            <person name="Pang K.C."/>
            <person name="Pavan W.J."/>
            <person name="Pavesi G."/>
            <person name="Pesole G."/>
            <person name="Petrovsky N."/>
            <person name="Piazza S."/>
            <person name="Reed J."/>
            <person name="Reid J.F."/>
            <person name="Ring B.Z."/>
            <person name="Ringwald M."/>
            <person name="Rost B."/>
            <person name="Ruan Y."/>
            <person name="Salzberg S.L."/>
            <person name="Sandelin A."/>
            <person name="Schneider C."/>
            <person name="Schoenbach C."/>
            <person name="Sekiguchi K."/>
            <person name="Semple C.A."/>
            <person name="Seno S."/>
            <person name="Sessa L."/>
            <person name="Sheng Y."/>
            <person name="Shibata Y."/>
            <person name="Shimada H."/>
            <person name="Shimada K."/>
            <person name="Silva D."/>
            <person name="Sinclair B."/>
            <person name="Sperling S."/>
            <person name="Stupka E."/>
            <person name="Sugiura K."/>
            <person name="Sultana R."/>
            <person name="Takenaka Y."/>
            <person name="Taki K."/>
            <person name="Tammoja K."/>
            <person name="Tan S.L."/>
            <person name="Tang S."/>
            <person name="Taylor M.S."/>
            <person name="Tegner J."/>
            <person name="Teichmann S.A."/>
            <person name="Ueda H.R."/>
            <person name="van Nimwegen E."/>
            <person name="Verardo R."/>
            <person name="Wei C.L."/>
            <person name="Yagi K."/>
            <person name="Yamanishi H."/>
            <person name="Zabarovsky E."/>
            <person name="Zhu S."/>
            <person name="Zimmer A."/>
            <person name="Hide W."/>
            <person name="Bult C."/>
            <person name="Grimmond S.M."/>
            <person name="Teasdale R.D."/>
            <person name="Liu E.T."/>
            <person name="Brusic V."/>
            <person name="Quackenbush J."/>
            <person name="Wahlestedt C."/>
            <person name="Mattick J.S."/>
            <person name="Hume D.A."/>
            <person name="Kai C."/>
            <person name="Sasaki D."/>
            <person name="Tomaru Y."/>
            <person name="Fukuda S."/>
            <person name="Kanamori-Katayama M."/>
            <person name="Suzuki M."/>
            <person name="Aoki J."/>
            <person name="Arakawa T."/>
            <person name="Iida J."/>
            <person name="Imamura K."/>
            <person name="Itoh M."/>
            <person name="Kato T."/>
            <person name="Kawaji H."/>
            <person name="Kawagashira N."/>
            <person name="Kawashima T."/>
            <person name="Kojima M."/>
            <person name="Kondo S."/>
            <person name="Konno H."/>
            <person name="Nakano K."/>
            <person name="Ninomiya N."/>
            <person name="Nishio T."/>
            <person name="Okada M."/>
            <person name="Plessy C."/>
            <person name="Shibata K."/>
            <person name="Shiraki T."/>
            <person name="Suzuki S."/>
            <person name="Tagami M."/>
            <person name="Waki K."/>
            <person name="Watahiki A."/>
            <person name="Okamura-Oho Y."/>
            <person name="Suzuki H."/>
            <person name="Kawai J."/>
            <person name="Hayashizaki Y."/>
        </authorList>
    </citation>
    <scope>NUCLEOTIDE SEQUENCE [LARGE SCALE MRNA]</scope>
    <source>
        <strain>C57BL/6J</strain>
        <tissue>Bone marrow</tissue>
        <tissue>Embryo</tissue>
    </source>
</reference>
<reference key="2">
    <citation type="journal article" date="2004" name="DNA Res.">
        <title>Prediction of the coding sequences of mouse homologues of KIAA gene: IV. The complete nucleotide sequences of 500 mouse KIAA-homologous cDNAs identified by screening of terminal sequences of cDNA clones randomly sampled from size-fractionated libraries.</title>
        <authorList>
            <person name="Okazaki N."/>
            <person name="Kikuno R."/>
            <person name="Ohara R."/>
            <person name="Inamoto S."/>
            <person name="Koseki H."/>
            <person name="Hiraoka S."/>
            <person name="Saga Y."/>
            <person name="Seino S."/>
            <person name="Nishimura M."/>
            <person name="Kaisho T."/>
            <person name="Hoshino K."/>
            <person name="Kitamura H."/>
            <person name="Nagase T."/>
            <person name="Ohara O."/>
            <person name="Koga H."/>
        </authorList>
    </citation>
    <scope>NUCLEOTIDE SEQUENCE [LARGE SCALE MRNA]</scope>
    <source>
        <tissue>Fetal brain</tissue>
    </source>
</reference>
<reference key="3">
    <citation type="journal article" date="2004" name="Genome Res.">
        <title>The status, quality, and expansion of the NIH full-length cDNA project: the Mammalian Gene Collection (MGC).</title>
        <authorList>
            <consortium name="The MGC Project Team"/>
        </authorList>
    </citation>
    <scope>NUCLEOTIDE SEQUENCE [LARGE SCALE MRNA]</scope>
    <source>
        <tissue>Salivary gland</tissue>
    </source>
</reference>
<reference key="4">
    <citation type="journal article" date="2005" name="Cell">
        <title>Subtype-specific and ER lumenal environment-dependent regulation of inositol 1,4,5-trisphosphate receptor type 1 by ERp44.</title>
        <authorList>
            <person name="Higo T."/>
            <person name="Hattori M."/>
            <person name="Nakamura T."/>
            <person name="Natsume T."/>
            <person name="Michikawa T."/>
            <person name="Mikoshiba K."/>
        </authorList>
    </citation>
    <scope>INTERACTION WITH ITPR1</scope>
    <scope>SUBCELLULAR LOCATION</scope>
    <scope>TISSUE SPECIFICITY</scope>
    <scope>MUTAGENESIS OF CYS-58</scope>
</reference>
<reference key="5">
    <citation type="journal article" date="2010" name="Cell">
        <title>A tissue-specific atlas of mouse protein phosphorylation and expression.</title>
        <authorList>
            <person name="Huttlin E.L."/>
            <person name="Jedrychowski M.P."/>
            <person name="Elias J.E."/>
            <person name="Goswami T."/>
            <person name="Rad R."/>
            <person name="Beausoleil S.A."/>
            <person name="Villen J."/>
            <person name="Haas W."/>
            <person name="Sowa M.E."/>
            <person name="Gygi S.P."/>
        </authorList>
    </citation>
    <scope>IDENTIFICATION BY MASS SPECTROMETRY [LARGE SCALE ANALYSIS]</scope>
    <source>
        <tissue>Brain</tissue>
        <tissue>Brown adipose tissue</tissue>
        <tissue>Heart</tissue>
        <tissue>Kidney</tissue>
        <tissue>Liver</tissue>
        <tissue>Lung</tissue>
        <tissue>Pancreas</tissue>
        <tissue>Spleen</tissue>
        <tissue>Testis</tissue>
    </source>
</reference>
<dbReference type="EMBL" id="AK003217">
    <property type="protein sequence ID" value="BAB22648.1"/>
    <property type="molecule type" value="mRNA"/>
</dbReference>
<dbReference type="EMBL" id="AK151497">
    <property type="protein sequence ID" value="BAE30449.1"/>
    <property type="molecule type" value="mRNA"/>
</dbReference>
<dbReference type="EMBL" id="AK160113">
    <property type="protein sequence ID" value="BAE35637.1"/>
    <property type="molecule type" value="mRNA"/>
</dbReference>
<dbReference type="EMBL" id="AK172973">
    <property type="protein sequence ID" value="BAD32251.1"/>
    <property type="status" value="ALT_INIT"/>
    <property type="molecule type" value="mRNA"/>
</dbReference>
<dbReference type="EMBL" id="BC019558">
    <property type="protein sequence ID" value="AAH19558.1"/>
    <property type="molecule type" value="mRNA"/>
</dbReference>
<dbReference type="CCDS" id="CCDS18165.1"/>
<dbReference type="RefSeq" id="NP_083848.1">
    <property type="nucleotide sequence ID" value="NM_029572.3"/>
</dbReference>
<dbReference type="SMR" id="Q9D1Q6"/>
<dbReference type="BioGRID" id="218067">
    <property type="interactions" value="41"/>
</dbReference>
<dbReference type="FunCoup" id="Q9D1Q6">
    <property type="interactions" value="3487"/>
</dbReference>
<dbReference type="IntAct" id="Q9D1Q6">
    <property type="interactions" value="17"/>
</dbReference>
<dbReference type="MINT" id="Q9D1Q6"/>
<dbReference type="STRING" id="10090.ENSMUSP00000030028"/>
<dbReference type="GlyGen" id="Q9D1Q6">
    <property type="glycosylation" value="2 sites, 1 O-linked glycan (2 sites)"/>
</dbReference>
<dbReference type="iPTMnet" id="Q9D1Q6"/>
<dbReference type="PhosphoSitePlus" id="Q9D1Q6"/>
<dbReference type="SwissPalm" id="Q9D1Q6"/>
<dbReference type="REPRODUCTION-2DPAGE" id="IPI00134058"/>
<dbReference type="REPRODUCTION-2DPAGE" id="Q9D1Q6"/>
<dbReference type="jPOST" id="Q9D1Q6"/>
<dbReference type="PaxDb" id="10090-ENSMUSP00000030028"/>
<dbReference type="PeptideAtlas" id="Q9D1Q6"/>
<dbReference type="ProteomicsDB" id="275477"/>
<dbReference type="Pumba" id="Q9D1Q6"/>
<dbReference type="Antibodypedia" id="753">
    <property type="antibodies" value="307 antibodies from 33 providers"/>
</dbReference>
<dbReference type="DNASU" id="76299"/>
<dbReference type="Ensembl" id="ENSMUST00000030028.5">
    <property type="protein sequence ID" value="ENSMUSP00000030028.5"/>
    <property type="gene ID" value="ENSMUSG00000028343.11"/>
</dbReference>
<dbReference type="GeneID" id="76299"/>
<dbReference type="KEGG" id="mmu:76299"/>
<dbReference type="UCSC" id="uc008suy.1">
    <property type="organism name" value="mouse"/>
</dbReference>
<dbReference type="AGR" id="MGI:1923549"/>
<dbReference type="CTD" id="23071"/>
<dbReference type="MGI" id="MGI:1923549">
    <property type="gene designation" value="Erp44"/>
</dbReference>
<dbReference type="VEuPathDB" id="HostDB:ENSMUSG00000028343"/>
<dbReference type="eggNOG" id="KOG0912">
    <property type="taxonomic scope" value="Eukaryota"/>
</dbReference>
<dbReference type="GeneTree" id="ENSGT00930000151031"/>
<dbReference type="HOGENOM" id="CLU_054449_1_0_1"/>
<dbReference type="InParanoid" id="Q9D1Q6"/>
<dbReference type="OMA" id="DWCRFSN"/>
<dbReference type="OrthoDB" id="294696at2759"/>
<dbReference type="PhylomeDB" id="Q9D1Q6"/>
<dbReference type="TreeFam" id="TF106378"/>
<dbReference type="Reactome" id="R-MMU-6798695">
    <property type="pathway name" value="Neutrophil degranulation"/>
</dbReference>
<dbReference type="BioGRID-ORCS" id="76299">
    <property type="hits" value="11 hits in 78 CRISPR screens"/>
</dbReference>
<dbReference type="ChiTaRS" id="Erp44">
    <property type="organism name" value="mouse"/>
</dbReference>
<dbReference type="PRO" id="PR:Q9D1Q6"/>
<dbReference type="Proteomes" id="UP000000589">
    <property type="component" value="Chromosome 4"/>
</dbReference>
<dbReference type="RNAct" id="Q9D1Q6">
    <property type="molecule type" value="protein"/>
</dbReference>
<dbReference type="Bgee" id="ENSMUSG00000028343">
    <property type="expression patterns" value="Expressed in seminal vesicle and 273 other cell types or tissues"/>
</dbReference>
<dbReference type="GO" id="GO:0009986">
    <property type="term" value="C:cell surface"/>
    <property type="evidence" value="ECO:0000314"/>
    <property type="project" value="MGI"/>
</dbReference>
<dbReference type="GO" id="GO:0005788">
    <property type="term" value="C:endoplasmic reticulum lumen"/>
    <property type="evidence" value="ECO:0000250"/>
    <property type="project" value="UniProtKB"/>
</dbReference>
<dbReference type="GO" id="GO:0005789">
    <property type="term" value="C:endoplasmic reticulum membrane"/>
    <property type="evidence" value="ECO:0000250"/>
    <property type="project" value="UniProtKB"/>
</dbReference>
<dbReference type="GO" id="GO:0005793">
    <property type="term" value="C:endoplasmic reticulum-Golgi intermediate compartment"/>
    <property type="evidence" value="ECO:0007669"/>
    <property type="project" value="Ensembl"/>
</dbReference>
<dbReference type="GO" id="GO:0003756">
    <property type="term" value="F:protein disulfide isomerase activity"/>
    <property type="evidence" value="ECO:0000250"/>
    <property type="project" value="UniProtKB"/>
</dbReference>
<dbReference type="GO" id="GO:0009100">
    <property type="term" value="P:glycoprotein metabolic process"/>
    <property type="evidence" value="ECO:0000250"/>
    <property type="project" value="UniProtKB"/>
</dbReference>
<dbReference type="GO" id="GO:0006457">
    <property type="term" value="P:protein folding"/>
    <property type="evidence" value="ECO:0000250"/>
    <property type="project" value="UniProtKB"/>
</dbReference>
<dbReference type="GO" id="GO:0034976">
    <property type="term" value="P:response to endoplasmic reticulum stress"/>
    <property type="evidence" value="ECO:0000250"/>
    <property type="project" value="UniProtKB"/>
</dbReference>
<dbReference type="GO" id="GO:0006986">
    <property type="term" value="P:response to unfolded protein"/>
    <property type="evidence" value="ECO:0000250"/>
    <property type="project" value="UniProtKB"/>
</dbReference>
<dbReference type="CDD" id="cd02996">
    <property type="entry name" value="PDI_a_ERp44"/>
    <property type="match status" value="1"/>
</dbReference>
<dbReference type="CDD" id="cd03072">
    <property type="entry name" value="PDI_b'_ERp44"/>
    <property type="match status" value="1"/>
</dbReference>
<dbReference type="CDD" id="cd03070">
    <property type="entry name" value="PDI_b_ERp44"/>
    <property type="match status" value="1"/>
</dbReference>
<dbReference type="FunFam" id="3.40.30.10:FF:000051">
    <property type="entry name" value="endoplasmic reticulum resident protein 44"/>
    <property type="match status" value="1"/>
</dbReference>
<dbReference type="FunFam" id="3.40.30.10:FF:000074">
    <property type="entry name" value="endoplasmic reticulum resident protein 44"/>
    <property type="match status" value="1"/>
</dbReference>
<dbReference type="FunFam" id="3.40.30.10:FF:000128">
    <property type="entry name" value="endoplasmic reticulum resident protein 44"/>
    <property type="match status" value="1"/>
</dbReference>
<dbReference type="Gene3D" id="3.40.30.10">
    <property type="entry name" value="Glutaredoxin"/>
    <property type="match status" value="3"/>
</dbReference>
<dbReference type="InterPro" id="IPR052643">
    <property type="entry name" value="ERP44"/>
</dbReference>
<dbReference type="InterPro" id="IPR041862">
    <property type="entry name" value="ERp44_PDI_b"/>
</dbReference>
<dbReference type="InterPro" id="IPR041870">
    <property type="entry name" value="ERp44_PDI_b"/>
</dbReference>
<dbReference type="InterPro" id="IPR036249">
    <property type="entry name" value="Thioredoxin-like_sf"/>
</dbReference>
<dbReference type="InterPro" id="IPR013766">
    <property type="entry name" value="Thioredoxin_domain"/>
</dbReference>
<dbReference type="PANTHER" id="PTHR46295">
    <property type="entry name" value="ENDOPLASMIC RETICULUM RESIDENT PROTEIN 44"/>
    <property type="match status" value="1"/>
</dbReference>
<dbReference type="PANTHER" id="PTHR46295:SF1">
    <property type="entry name" value="ENDOPLASMIC RETICULUM RESIDENT PROTEIN 44"/>
    <property type="match status" value="1"/>
</dbReference>
<dbReference type="Pfam" id="PF00085">
    <property type="entry name" value="Thioredoxin"/>
    <property type="match status" value="1"/>
</dbReference>
<dbReference type="Pfam" id="PF13848">
    <property type="entry name" value="Thioredoxin_6"/>
    <property type="match status" value="1"/>
</dbReference>
<dbReference type="SUPFAM" id="SSF52833">
    <property type="entry name" value="Thioredoxin-like"/>
    <property type="match status" value="3"/>
</dbReference>
<dbReference type="PROSITE" id="PS00014">
    <property type="entry name" value="ER_TARGET"/>
    <property type="match status" value="1"/>
</dbReference>
<dbReference type="PROSITE" id="PS51352">
    <property type="entry name" value="THIOREDOXIN_2"/>
    <property type="match status" value="1"/>
</dbReference>
<organism>
    <name type="scientific">Mus musculus</name>
    <name type="common">Mouse</name>
    <dbReference type="NCBI Taxonomy" id="10090"/>
    <lineage>
        <taxon>Eukaryota</taxon>
        <taxon>Metazoa</taxon>
        <taxon>Chordata</taxon>
        <taxon>Craniata</taxon>
        <taxon>Vertebrata</taxon>
        <taxon>Euteleostomi</taxon>
        <taxon>Mammalia</taxon>
        <taxon>Eutheria</taxon>
        <taxon>Euarchontoglires</taxon>
        <taxon>Glires</taxon>
        <taxon>Rodentia</taxon>
        <taxon>Myomorpha</taxon>
        <taxon>Muroidea</taxon>
        <taxon>Muridae</taxon>
        <taxon>Murinae</taxon>
        <taxon>Mus</taxon>
        <taxon>Mus</taxon>
    </lineage>
</organism>
<feature type="signal peptide" evidence="1">
    <location>
        <begin position="1"/>
        <end position="29"/>
    </location>
</feature>
<feature type="chain" id="PRO_0000034181" description="Endoplasmic reticulum resident protein 44">
    <location>
        <begin position="30"/>
        <end position="406"/>
    </location>
</feature>
<feature type="domain" description="Thioredoxin" evidence="3">
    <location>
        <begin position="30"/>
        <end position="138"/>
    </location>
</feature>
<feature type="region of interest" description="Interaction with ITPR1" evidence="6">
    <location>
        <begin position="236"/>
        <end position="285"/>
    </location>
</feature>
<feature type="region of interest" description="Disordered" evidence="5">
    <location>
        <begin position="360"/>
        <end position="387"/>
    </location>
</feature>
<feature type="short sequence motif" description="Prevents secretion from ER" evidence="4">
    <location>
        <begin position="403"/>
        <end position="406"/>
    </location>
</feature>
<feature type="compositionally biased region" description="Polar residues" evidence="5">
    <location>
        <begin position="377"/>
        <end position="387"/>
    </location>
</feature>
<feature type="disulfide bond" evidence="1">
    <location>
        <begin position="189"/>
        <end position="241"/>
    </location>
</feature>
<feature type="disulfide bond" evidence="1">
    <location>
        <begin position="301"/>
        <end position="318"/>
    </location>
</feature>
<feature type="mutagenesis site" description="No effect on interaction with ITPR1." evidence="6">
    <original>C</original>
    <variation>S</variation>
    <location>
        <position position="58"/>
    </location>
</feature>
<comment type="function">
    <text evidence="2">Mediates thiol-dependent retention in the early secretory pathway, forming mixed disulfides with substrate proteins through its conserved CRFS motif. Inhibits the calcium channel activity of ITPR1. May have a role in the control of oxidative protein folding in the endoplasmic reticulum. Required to retain ERO1A and ERO1B in the endoplasmic reticulum.</text>
</comment>
<comment type="subunit">
    <text evidence="2 6">Forms mixed disulfides with both ERO1A and ERO1B and cargo folding intermediates; the interactions with ERO1A and ERO1B result in their retention in the endoplasmic reticulum (By similarity). Directly interacts with ITPR1 in a pH-, redox state- and calcium-dependent manner, but not with ITPR2 or ITPR3 (PubMed:15652484). The strength of this interaction inversely correlates with calcium concentration (PubMed:15652484).</text>
</comment>
<comment type="interaction">
    <interactant intactId="EBI-541567">
        <id>Q9D1Q6</id>
    </interactant>
    <interactant intactId="EBI-541478">
        <id>P11881</id>
        <label>Itpr1</label>
    </interactant>
    <organismsDiffer>false</organismsDiffer>
    <experiments>5</experiments>
</comment>
<comment type="subcellular location">
    <subcellularLocation>
        <location evidence="4 6">Endoplasmic reticulum lumen</location>
    </subcellularLocation>
</comment>
<comment type="tissue specificity">
    <text evidence="6">Widely expressed.</text>
</comment>
<comment type="sequence caution" evidence="7">
    <conflict type="erroneous initiation">
        <sequence resource="EMBL-CDS" id="BAD32251"/>
    </conflict>
</comment>
<sequence>MNPAVFLSLADLRCSLLLLVTSIFTPITAEIASLDSENIDEILNNADVALVNFYADWCRFSQMLHPIFEEASDVIKEEYPDKNQVVFARVDCDQHSDIAQRYRISKYPTLKLFRNGMMMKREYRGQRSVKALADYIRQQKSNPVHEIQSLDEVTNLDRSKRNIIGYFEQKDSENYRVFERVASILHDDCAFLSAFGDLSKPERYNGDNVIYKPPGRSAPDMVYLGSMTNFDVTYNWIQDKCVPLVREITFENGEELTEEGLPFLILFHMKDDTESLEIFQNEVARQLISEKGTINFLHADCDKFRHPLLHIQKTPADCPVIAIDSFRHMYVFGDFKDVLIPGKLKQFVFDLHSGKLHREFHHGPDPTDTAPGEQDQDVASSPPESSFQKLAPSEYRYTLLRDRDEL</sequence>
<name>ERP44_MOUSE</name>
<gene>
    <name type="primary">Erp44</name>
    <name type="synonym">Kiaa0573</name>
    <name type="synonym">Txndc4</name>
</gene>
<proteinExistence type="evidence at protein level"/>
<protein>
    <recommendedName>
        <fullName>Endoplasmic reticulum resident protein 44</fullName>
        <shortName>ER protein 44</shortName>
        <shortName>ERp44</shortName>
    </recommendedName>
    <alternativeName>
        <fullName>Thioredoxin domain-containing protein 4</fullName>
    </alternativeName>
</protein>
<accession>Q9D1Q6</accession>
<accession>Q3TVI1</accession>
<accession>Q6A045</accession>
<keyword id="KW-0143">Chaperone</keyword>
<keyword id="KW-1015">Disulfide bond</keyword>
<keyword id="KW-0256">Endoplasmic reticulum</keyword>
<keyword id="KW-1185">Reference proteome</keyword>
<keyword id="KW-0732">Signal</keyword>
<evidence type="ECO:0000250" key="1"/>
<evidence type="ECO:0000250" key="2">
    <source>
        <dbReference type="UniProtKB" id="Q9BS26"/>
    </source>
</evidence>
<evidence type="ECO:0000255" key="3">
    <source>
        <dbReference type="PROSITE-ProRule" id="PRU00691"/>
    </source>
</evidence>
<evidence type="ECO:0000255" key="4">
    <source>
        <dbReference type="PROSITE-ProRule" id="PRU10138"/>
    </source>
</evidence>
<evidence type="ECO:0000256" key="5">
    <source>
        <dbReference type="SAM" id="MobiDB-lite"/>
    </source>
</evidence>
<evidence type="ECO:0000269" key="6">
    <source>
    </source>
</evidence>
<evidence type="ECO:0000305" key="7"/>